<reference key="1">
    <citation type="journal article" date="2002" name="Lancet">
        <title>Genome and virulence determinants of high virulence community-acquired MRSA.</title>
        <authorList>
            <person name="Baba T."/>
            <person name="Takeuchi F."/>
            <person name="Kuroda M."/>
            <person name="Yuzawa H."/>
            <person name="Aoki K."/>
            <person name="Oguchi A."/>
            <person name="Nagai Y."/>
            <person name="Iwama N."/>
            <person name="Asano K."/>
            <person name="Naimi T."/>
            <person name="Kuroda H."/>
            <person name="Cui L."/>
            <person name="Yamamoto K."/>
            <person name="Hiramatsu K."/>
        </authorList>
    </citation>
    <scope>NUCLEOTIDE SEQUENCE [LARGE SCALE GENOMIC DNA]</scope>
    <source>
        <strain>MW2</strain>
    </source>
</reference>
<reference key="2">
    <citation type="journal article" date="2013" name="Infect. Immun.">
        <title>Staphylococcus aureus SasA is responsible for binding to the salivary agglutinin gp340, derived from human saliva.</title>
        <authorList>
            <person name="Kukita K."/>
            <person name="Kawada-Matsuo M."/>
            <person name="Oho T."/>
            <person name="Nagatomo M."/>
            <person name="Oogai Y."/>
            <person name="Hashimoto M."/>
            <person name="Suda Y."/>
            <person name="Tanaka T."/>
            <person name="Komatsuzawa H."/>
        </authorList>
    </citation>
    <scope>INTERACTION WITH HOST DMBT1</scope>
    <scope>DOMAIN</scope>
    <scope>DISRUPTION PHENOTYPE</scope>
    <source>
        <strain>MW2</strain>
    </source>
</reference>
<feature type="signal peptide" evidence="3">
    <location>
        <begin position="1"/>
        <end position="89"/>
    </location>
</feature>
<feature type="chain" id="PRO_0000273928" description="Serine-rich adhesin for platelets">
    <location>
        <begin position="90"/>
        <end position="2236"/>
    </location>
</feature>
<feature type="propeptide" id="PRO_0000273929" description="Removed by sortase" evidence="4">
    <location>
        <begin position="2237"/>
        <end position="2275"/>
    </location>
</feature>
<feature type="region of interest" description="Serine-rich repeat region 1, SRR1" evidence="9">
    <location>
        <begin position="90"/>
        <end position="264"/>
    </location>
</feature>
<feature type="region of interest" description="Disordered" evidence="5">
    <location>
        <begin position="100"/>
        <end position="229"/>
    </location>
</feature>
<feature type="region of interest" description="Non-repeat region (NRR)" evidence="9">
    <location>
        <begin position="265"/>
        <end position="751"/>
    </location>
</feature>
<feature type="region of interest" description="Disordered" evidence="5">
    <location>
        <begin position="751"/>
        <end position="2247"/>
    </location>
</feature>
<feature type="region of interest" description="Serine-rich repeat region 2, SRR2" evidence="9">
    <location>
        <begin position="752"/>
        <end position="2236"/>
    </location>
</feature>
<feature type="short sequence motif" description="LPXTG sorting signal" evidence="4">
    <location>
        <begin position="2233"/>
        <end position="2237"/>
    </location>
</feature>
<feature type="compositionally biased region" description="Polar residues" evidence="5">
    <location>
        <begin position="100"/>
        <end position="111"/>
    </location>
</feature>
<feature type="compositionally biased region" description="Low complexity" evidence="5">
    <location>
        <begin position="112"/>
        <end position="128"/>
    </location>
</feature>
<feature type="compositionally biased region" description="Polar residues" evidence="5">
    <location>
        <begin position="129"/>
        <end position="140"/>
    </location>
</feature>
<feature type="compositionally biased region" description="Low complexity" evidence="5">
    <location>
        <begin position="150"/>
        <end position="229"/>
    </location>
</feature>
<feature type="compositionally biased region" description="Low complexity" evidence="5">
    <location>
        <begin position="752"/>
        <end position="1392"/>
    </location>
</feature>
<feature type="compositionally biased region" description="Low complexity" evidence="5">
    <location>
        <begin position="1402"/>
        <end position="2218"/>
    </location>
</feature>
<feature type="modified residue" description="Pentaglycyl murein peptidoglycan amidated threonine" evidence="4">
    <location>
        <position position="2236"/>
    </location>
</feature>
<protein>
    <recommendedName>
        <fullName>Serine-rich adhesin for platelets</fullName>
    </recommendedName>
    <alternativeName>
        <fullName evidence="8">Adhesin SraP</fullName>
    </alternativeName>
    <alternativeName>
        <fullName>Staphylococcus aureus surface protein A</fullName>
        <shortName evidence="7">SasA</shortName>
    </alternativeName>
</protein>
<organism>
    <name type="scientific">Staphylococcus aureus (strain MW2)</name>
    <dbReference type="NCBI Taxonomy" id="196620"/>
    <lineage>
        <taxon>Bacteria</taxon>
        <taxon>Bacillati</taxon>
        <taxon>Bacillota</taxon>
        <taxon>Bacilli</taxon>
        <taxon>Bacillales</taxon>
        <taxon>Staphylococcaceae</taxon>
        <taxon>Staphylococcus</taxon>
    </lineage>
</organism>
<proteinExistence type="evidence at protein level"/>
<accession>Q8NUJ3</accession>
<gene>
    <name type="primary">sraP</name>
    <name evidence="7" type="synonym">sasA</name>
    <name type="ordered locus">MW2575</name>
</gene>
<keyword id="KW-0130">Cell adhesion</keyword>
<keyword id="KW-0134">Cell wall</keyword>
<keyword id="KW-0325">Glycoprotein</keyword>
<keyword id="KW-0572">Peptidoglycan-anchor</keyword>
<keyword id="KW-0964">Secreted</keyword>
<keyword id="KW-0732">Signal</keyword>
<keyword id="KW-0843">Virulence</keyword>
<evidence type="ECO:0000250" key="1"/>
<evidence type="ECO:0000250" key="2">
    <source>
        <dbReference type="UniProtKB" id="A0A0H2URK1"/>
    </source>
</evidence>
<evidence type="ECO:0000250" key="3">
    <source>
        <dbReference type="UniProtKB" id="Q2FUW1"/>
    </source>
</evidence>
<evidence type="ECO:0000255" key="4">
    <source>
        <dbReference type="PROSITE-ProRule" id="PRU00477"/>
    </source>
</evidence>
<evidence type="ECO:0000256" key="5">
    <source>
        <dbReference type="SAM" id="MobiDB-lite"/>
    </source>
</evidence>
<evidence type="ECO:0000269" key="6">
    <source>
    </source>
</evidence>
<evidence type="ECO:0000303" key="7">
    <source>
    </source>
</evidence>
<evidence type="ECO:0000305" key="8"/>
<evidence type="ECO:0000305" key="9">
    <source>
    </source>
</evidence>
<sequence>MSKRQKEFHDSLANEKTRVRLYKSGKNWVKSGIKEIEMFKIMGLPFISHSLVSQDNQSISKKMTGYGLKTTAVIGGAFTVNMLHDQQAFAASDAPLTSELNTQSETVGNQNSTTIEASTSTADSTSVTKNSSSVQTSNSDTVSSEKSEKVTSTTNSTSNQQEKLTSTSESTSSKNTTSSSDTKSVASTSSTEQPINTSTNQSTASNNTSQSTTPSSVNLNKTSTTSTSTAPVKLRTFSRLAMSTFASAATTTAVTANTITVNKDNLKQYMTTSGNATYDQSTGIVTLTQDAYSQKGAITLGTRIDSNKSFHFSGKVNLGNKYEGNGNGGDGIGFAFSPGVLGETGLNGAAVGIGGLSNAFGFKLDTYHNTSKPNSAAKANADPSNVAGGGAFGAFVTTDSYGVATTYTSSSTADNAAKLKVQPTNNTFQDFDINYNGDTKVMTVTYAGQTWTRNISDWIAKSGTTNFSLSMTASTGGATNLQQVQFGTFEYTESAVTQVRYVDVTTGKDIIPPKTYSGNVDQVVTIDNQQSALTAKGYNYTSVDSSYASTYNDTNKTVKMTNAGQSVTYYFTDVKAPTVTVGNQTIEVGKTMNPVVLTTTDNGTGTVTNTVTGLPSGLSYDSATNSIIGTPTKIGQSTVTVVSTDQANNKSTTTFTINVVDTTAPTVTPIGDQSSEVYSPISPIKIATQDNSGNAVTNTVTGLPSGLTFDSTNNTISGTPTNIGTSTITIVSTDASGNKTTTTFKYEVTRNSMSDSVSTSGSTQQSQSVSTSKADSQSASTSTSGSIVVSTSASTSKSTSVSLSDSVSASKSLSTSESNSVSSSTSTSLVNSQSVSSSMSDSASKSTSLSDSISNSSSTEKSESLSTSTSDSLRTSTSLSDSLSMSTSGSLSKSQSLSTSTSESSSTSASLSDSTSNAISTSESLSESASTSDSISISNSIANSQSASTSKSDSQSTSISLSTSDSKSMSTSESLSDSTSTSGSVSGSLSIAASQSVSTSTSDSMSTSEIVSDSISTSGSLSASDSKSMSVSSSMSTSQSGSTSESLSDSQSTSDSDSKSLSLSTSQSGSTSTSTSTSASVRTSESQSTSGSMSASQSDSMSISTSFSDSTSDSKSASTASSESISQSASTSTSGSVSTSTSLSTSNSERTSTSMSDSTSLSTSESDSISESTSTSDSISEAISASESTFISLSESNSTSDSESQSASAFLSESLSESTSESTSESVSSSTSESTSLSDSTSESGSTSTSLSNSTSGSASISTSTSISESTSTFKSESVSTSLSMSTSTSLSDSTSLSTSLSDSTSDSKSDSLSTSMSTSDSISTSKSDSISTSTSLSGSTSESESDSTSSSESKSDSTSMSISMSQSTSGSTSTSTSTSLSDSTSTSLSLSASMNQSGVDSNSASQSASNSTSTSTSESDSQSTSSYTSQSTSQSESTSTSTSLSDSTSISKSTSQSGSVSTSASLSGSESESDSQSISTSASESTSESASTSLSDSTSTSNSGSASTSTSLSNSASASESDSSSTSLSDSTSASMQSSESDSQSTSASLSDSLSTSTSNRMSTIASLSTSVSTSESGSTSESTSESDSTSTSLSDSQSTSRSTSASGSASTSTSTSDSRSTSASTSTSMRTSTSDSQSMSLSTSTSTSMSDSTSLSDSVSDSTSDSTSASTSGSMSVSISLSDSTSTSTSASEVMSASISDSQSMSESVNDSESVSESNSESDSKSMSGSTSVSDSGSLSVSTSLRKSESVSESSSLSGSQSMSDSVSTSDSSSLSVSTSLRSSESVSESDSLSDSKSTSGSTSTSTSGSLSTSTSLSGSESVSESTSLSDSISMSDSTSTSDSDSLSGSISLSGSTSLSTSDSLSDSKSLSSSQSMSGSESTSTSVSDSQSSSTSNSQFDSMSISASESDSMSTSDSSSISGSNSTSTSLSTSDSMSGSVSVSTSTSLSDSISGSTSLSDSSSTSTSTSLSDSMSQSQSTSTSASGSLSTSISTSMSMSASTSSSQSTSVSTSLSTSDSISDSTSISISGSQSTVESESTSDSTSISDSESLSTSDSDSTSTSTSDSTSGSTSTSISESLSTSGSGSTSVSDSTSMSESDSTSVSMSQSMSGSTYNSTSVSDSESVSTSTSTSLSTSDSTSTSESLSTSMSGSQSISDSTSTSMSGSTSTSESNSMHPSDSMSMHHTHSTSTSRLSSEATTSTSESQSTLSATSEVTKHNGTPAQSEKRLPDTGDSIKQNGLLGGVMTLLVGLGLMKRKKKKDENDQDDSQA</sequence>
<comment type="function">
    <text evidence="3 6">Mediates binding to human platelets, possibly through a receptor-ligand interaction. Probably associated with virulence in endovascular infection (By similarity). Interacts with host (human) gp-340 via the non-repeat region (NRR or binding region). Binding is inhibited by N-acetylneuraminic acid (NeuAc) (PubMed:23439307).</text>
</comment>
<comment type="subunit">
    <text evidence="6">Interacts with human gp-340 (DMBT1).</text>
</comment>
<comment type="subcellular location">
    <subcellularLocation>
        <location evidence="4">Secreted</location>
        <location evidence="4">Cell wall</location>
        <topology evidence="4">Peptidoglycan-anchor</topology>
    </subcellularLocation>
    <text evidence="3">Exported by the accessory SecA2/SecY2 system. Anchored to the cell wall by sortase A (By similarity).</text>
</comment>
<comment type="domain">
    <text evidence="6">The non-repeat region (NRR, also called binding region, BR) binds to human gp-340; binding is prevented by N-acetylneuraminic acid (NeuAc).</text>
</comment>
<comment type="PTM">
    <text evidence="1 3">Proteolytically cleaved by a metalloprotease.</text>
</comment>
<comment type="PTM">
    <text evidence="2 3">Glycosylated (By similarity). It is probable that most of the Ser residues in SSR1 and SSR2 are O-GlcNAcylated. Sequential glycosylation by sugar transferases are able to generate complex sugar polymorphisms (By similarity).</text>
</comment>
<comment type="disruption phenotype">
    <text evidence="6">Significantly decreased binding to human saliva- and gp340-coated resins (DMBT1).</text>
</comment>
<comment type="similarity">
    <text evidence="8">Belongs to the serine-rich repeat protein (SRRP) family.</text>
</comment>
<name>SRAP_STAAW</name>
<dbReference type="EMBL" id="BA000033">
    <property type="protein sequence ID" value="BAB96440.1"/>
    <property type="molecule type" value="Genomic_DNA"/>
</dbReference>
<dbReference type="RefSeq" id="WP_000044592.1">
    <property type="nucleotide sequence ID" value="NC_003923.1"/>
</dbReference>
<dbReference type="SMR" id="Q8NUJ3"/>
<dbReference type="KEGG" id="sam:MW2575"/>
<dbReference type="HOGENOM" id="CLU_002109_0_0_9"/>
<dbReference type="GO" id="GO:0005576">
    <property type="term" value="C:extracellular region"/>
    <property type="evidence" value="ECO:0007669"/>
    <property type="project" value="UniProtKB-KW"/>
</dbReference>
<dbReference type="GO" id="GO:0016020">
    <property type="term" value="C:membrane"/>
    <property type="evidence" value="ECO:0007669"/>
    <property type="project" value="InterPro"/>
</dbReference>
<dbReference type="GO" id="GO:0005509">
    <property type="term" value="F:calcium ion binding"/>
    <property type="evidence" value="ECO:0007669"/>
    <property type="project" value="InterPro"/>
</dbReference>
<dbReference type="GO" id="GO:0007155">
    <property type="term" value="P:cell adhesion"/>
    <property type="evidence" value="ECO:0007669"/>
    <property type="project" value="UniProtKB-KW"/>
</dbReference>
<dbReference type="CDD" id="cd01951">
    <property type="entry name" value="lectin_L-type"/>
    <property type="match status" value="1"/>
</dbReference>
<dbReference type="Gene3D" id="2.60.120.200">
    <property type="match status" value="1"/>
</dbReference>
<dbReference type="Gene3D" id="3.10.20.320">
    <property type="entry name" value="Putative peptidoglycan bound protein (lpxtg motif)"/>
    <property type="match status" value="1"/>
</dbReference>
<dbReference type="InterPro" id="IPR015919">
    <property type="entry name" value="Cadherin-like_sf"/>
</dbReference>
<dbReference type="InterPro" id="IPR013320">
    <property type="entry name" value="ConA-like_dom_sf"/>
</dbReference>
<dbReference type="InterPro" id="IPR022263">
    <property type="entry name" value="KxYKxGKxW"/>
</dbReference>
<dbReference type="InterPro" id="IPR056573">
    <property type="entry name" value="Lectin_L-type_dom"/>
</dbReference>
<dbReference type="InterPro" id="IPR019931">
    <property type="entry name" value="LPXTG_anchor"/>
</dbReference>
<dbReference type="NCBIfam" id="TIGR03715">
    <property type="entry name" value="KxYKxGKxW"/>
    <property type="match status" value="1"/>
</dbReference>
<dbReference type="NCBIfam" id="TIGR01167">
    <property type="entry name" value="LPXTG_anchor"/>
    <property type="match status" value="1"/>
</dbReference>
<dbReference type="PANTHER" id="PTHR22928">
    <property type="entry name" value="TELOMERE-ASSOCIATED PROTEIN RIF1"/>
    <property type="match status" value="1"/>
</dbReference>
<dbReference type="PANTHER" id="PTHR22928:SF3">
    <property type="entry name" value="TELOMERE-ASSOCIATED PROTEIN RIF1"/>
    <property type="match status" value="1"/>
</dbReference>
<dbReference type="Pfam" id="PF00746">
    <property type="entry name" value="Gram_pos_anchor"/>
    <property type="match status" value="1"/>
</dbReference>
<dbReference type="Pfam" id="PF19258">
    <property type="entry name" value="KxYKxGKxW_sig"/>
    <property type="match status" value="1"/>
</dbReference>
<dbReference type="Pfam" id="PF18483">
    <property type="entry name" value="Lectin_L-type_dom"/>
    <property type="match status" value="1"/>
</dbReference>
<dbReference type="SUPFAM" id="SSF49313">
    <property type="entry name" value="Cadherin-like"/>
    <property type="match status" value="2"/>
</dbReference>
<dbReference type="SUPFAM" id="SSF49899">
    <property type="entry name" value="Concanavalin A-like lectins/glucanases"/>
    <property type="match status" value="1"/>
</dbReference>
<dbReference type="PROSITE" id="PS50847">
    <property type="entry name" value="GRAM_POS_ANCHORING"/>
    <property type="match status" value="1"/>
</dbReference>